<dbReference type="EMBL" id="DQ226511">
    <property type="protein sequence ID" value="ABB20947.1"/>
    <property type="molecule type" value="Genomic_DNA"/>
</dbReference>
<dbReference type="RefSeq" id="YP_762250.1">
    <property type="nucleotide sequence ID" value="NC_008359.1"/>
</dbReference>
<dbReference type="SMR" id="Q09X28"/>
<dbReference type="GeneID" id="4290593"/>
<dbReference type="GO" id="GO:0009507">
    <property type="term" value="C:chloroplast"/>
    <property type="evidence" value="ECO:0007669"/>
    <property type="project" value="UniProtKB-SubCell"/>
</dbReference>
<dbReference type="GO" id="GO:0005763">
    <property type="term" value="C:mitochondrial small ribosomal subunit"/>
    <property type="evidence" value="ECO:0007669"/>
    <property type="project" value="TreeGrafter"/>
</dbReference>
<dbReference type="GO" id="GO:0003735">
    <property type="term" value="F:structural constituent of ribosome"/>
    <property type="evidence" value="ECO:0007669"/>
    <property type="project" value="InterPro"/>
</dbReference>
<dbReference type="GO" id="GO:0006412">
    <property type="term" value="P:translation"/>
    <property type="evidence" value="ECO:0007669"/>
    <property type="project" value="UniProtKB-UniRule"/>
</dbReference>
<dbReference type="CDD" id="cd01425">
    <property type="entry name" value="RPS2"/>
    <property type="match status" value="1"/>
</dbReference>
<dbReference type="FunFam" id="3.40.50.10490:FF:000101">
    <property type="match status" value="1"/>
</dbReference>
<dbReference type="FunFam" id="1.10.287.610:FF:000001">
    <property type="entry name" value="30S ribosomal protein S2"/>
    <property type="match status" value="1"/>
</dbReference>
<dbReference type="Gene3D" id="3.40.50.10490">
    <property type="entry name" value="Glucose-6-phosphate isomerase like protein, domain 1"/>
    <property type="match status" value="1"/>
</dbReference>
<dbReference type="Gene3D" id="1.10.287.610">
    <property type="entry name" value="Helix hairpin bin"/>
    <property type="match status" value="1"/>
</dbReference>
<dbReference type="HAMAP" id="MF_00291_B">
    <property type="entry name" value="Ribosomal_uS2_B"/>
    <property type="match status" value="1"/>
</dbReference>
<dbReference type="InterPro" id="IPR001865">
    <property type="entry name" value="Ribosomal_uS2"/>
</dbReference>
<dbReference type="InterPro" id="IPR005706">
    <property type="entry name" value="Ribosomal_uS2_bac/mit/plastid"/>
</dbReference>
<dbReference type="InterPro" id="IPR018130">
    <property type="entry name" value="Ribosomal_uS2_CS"/>
</dbReference>
<dbReference type="InterPro" id="IPR023591">
    <property type="entry name" value="Ribosomal_uS2_flav_dom_sf"/>
</dbReference>
<dbReference type="NCBIfam" id="TIGR01011">
    <property type="entry name" value="rpsB_bact"/>
    <property type="match status" value="1"/>
</dbReference>
<dbReference type="PANTHER" id="PTHR12534">
    <property type="entry name" value="30S RIBOSOMAL PROTEIN S2 PROKARYOTIC AND ORGANELLAR"/>
    <property type="match status" value="1"/>
</dbReference>
<dbReference type="PANTHER" id="PTHR12534:SF0">
    <property type="entry name" value="SMALL RIBOSOMAL SUBUNIT PROTEIN US2M"/>
    <property type="match status" value="1"/>
</dbReference>
<dbReference type="Pfam" id="PF00318">
    <property type="entry name" value="Ribosomal_S2"/>
    <property type="match status" value="1"/>
</dbReference>
<dbReference type="PRINTS" id="PR00395">
    <property type="entry name" value="RIBOSOMALS2"/>
</dbReference>
<dbReference type="SUPFAM" id="SSF52313">
    <property type="entry name" value="Ribosomal protein S2"/>
    <property type="match status" value="1"/>
</dbReference>
<dbReference type="PROSITE" id="PS00963">
    <property type="entry name" value="RIBOSOMAL_S2_2"/>
    <property type="match status" value="1"/>
</dbReference>
<keyword id="KW-0150">Chloroplast</keyword>
<keyword id="KW-0934">Plastid</keyword>
<keyword id="KW-0687">Ribonucleoprotein</keyword>
<keyword id="KW-0689">Ribosomal protein</keyword>
<name>RR2_MORIN</name>
<feature type="chain" id="PRO_0000352131" description="Small ribosomal subunit protein uS2c">
    <location>
        <begin position="1"/>
        <end position="236"/>
    </location>
</feature>
<evidence type="ECO:0000305" key="1"/>
<organism>
    <name type="scientific">Morus indica</name>
    <name type="common">Mulberry</name>
    <dbReference type="NCBI Taxonomy" id="248361"/>
    <lineage>
        <taxon>Eukaryota</taxon>
        <taxon>Viridiplantae</taxon>
        <taxon>Streptophyta</taxon>
        <taxon>Embryophyta</taxon>
        <taxon>Tracheophyta</taxon>
        <taxon>Spermatophyta</taxon>
        <taxon>Magnoliopsida</taxon>
        <taxon>eudicotyledons</taxon>
        <taxon>Gunneridae</taxon>
        <taxon>Pentapetalae</taxon>
        <taxon>rosids</taxon>
        <taxon>fabids</taxon>
        <taxon>Rosales</taxon>
        <taxon>Moraceae</taxon>
        <taxon>Moreae</taxon>
        <taxon>Morus</taxon>
    </lineage>
</organism>
<comment type="subcellular location">
    <subcellularLocation>
        <location>Plastid</location>
        <location>Chloroplast</location>
    </subcellularLocation>
</comment>
<comment type="similarity">
    <text evidence="1">Belongs to the universal ribosomal protein uS2 family.</text>
</comment>
<protein>
    <recommendedName>
        <fullName evidence="1">Small ribosomal subunit protein uS2c</fullName>
    </recommendedName>
    <alternativeName>
        <fullName>30S ribosomal protein S2, chloroplastic</fullName>
    </alternativeName>
</protein>
<proteinExistence type="inferred from homology"/>
<reference key="1">
    <citation type="submission" date="2005-09" db="EMBL/GenBank/DDBJ databases">
        <title>The chloroplast genome of mulberry: structural features and comparative analysis.</title>
        <authorList>
            <person name="Ravi V."/>
            <person name="Khurana J.P."/>
            <person name="Tyagi A.K."/>
            <person name="Khurana P."/>
        </authorList>
    </citation>
    <scope>NUCLEOTIDE SEQUENCE [LARGE SCALE GENOMIC DNA]</scope>
    <source>
        <strain>cv. K2</strain>
    </source>
</reference>
<accession>Q09X28</accession>
<sequence>MTRRYWNINLEEMMDAGIHFGHGTRKWNPKMAPYISAKRKGIHIINLTRTARFLSEACDLVFDAASRGKQFLIVGTKNKAADSVAQAAIKARCHYVNKKWLGGMLTNWYTTETRLHKFRDLRTEQKTGRLKRLPKRDAAVLKRQISHLQTYLGGIKYMTGLPDIVIIVDQQEEYTALQECITLRIPTICLIDTNCDPDLADISIPANDDAIASIRLILNKLVFAICEGRSSYIRNS</sequence>
<geneLocation type="chloroplast"/>
<gene>
    <name type="primary">rps2</name>
    <name type="ordered locus">MoinCp010</name>
</gene>